<name>S41A3_MOUSE</name>
<gene>
    <name type="primary">Slc41a3</name>
</gene>
<accession>Q921R8</accession>
<accession>Q9DC67</accession>
<keyword id="KW-0025">Alternative splicing</keyword>
<keyword id="KW-0406">Ion transport</keyword>
<keyword id="KW-0460">Magnesium</keyword>
<keyword id="KW-0472">Membrane</keyword>
<keyword id="KW-0496">Mitochondrion</keyword>
<keyword id="KW-0999">Mitochondrion inner membrane</keyword>
<keyword id="KW-1185">Reference proteome</keyword>
<keyword id="KW-0812">Transmembrane</keyword>
<keyword id="KW-1133">Transmembrane helix</keyword>
<keyword id="KW-0813">Transport</keyword>
<sequence length="488" mass="53257">MEGTEARQRRLEGCGRLKELGPLPSHDAGRLPKASEEGHLAVSESQLVDAKSLEAPPGRETSLIIGFQVVIPFLLAGVGLSWAGLLLNYFQHWPVFKDVKDLMTLVPPLVGLKGNLEMTLASRLSTSANTGQIDDRQERYKIISSNLAVVQVQATVVGLLAAVASLMLGTVSHEEFDWSKVALLCTSSVITAFLAALALGILMICIVIGARKFGVNPDNIATPIAASLGDLITLSILALMSSFFYSHKDTWYLTPLVCVGFLALTPLWLFIAKQNPPIMKILKYGWFPIILAMIISSFGGLILSKTISKHEFKGMAVLTPVMCGVGGNLVAIQTSRISTFLHMWSTPGVLPVQMKRFWPNPCFIFCSSEINSVSARVLLFLVVPGHLIFFYLICLVEGQSVTNSKIFILLYLVAGVVQVVILLYLAEVTVRLTWHQALDPDNHCIPYLTGLGDLLGTSLLALCFFLDWLLRGRANLQELVSELVSVPP</sequence>
<reference key="1">
    <citation type="journal article" date="2005" name="Science">
        <title>The transcriptional landscape of the mammalian genome.</title>
        <authorList>
            <person name="Carninci P."/>
            <person name="Kasukawa T."/>
            <person name="Katayama S."/>
            <person name="Gough J."/>
            <person name="Frith M.C."/>
            <person name="Maeda N."/>
            <person name="Oyama R."/>
            <person name="Ravasi T."/>
            <person name="Lenhard B."/>
            <person name="Wells C."/>
            <person name="Kodzius R."/>
            <person name="Shimokawa K."/>
            <person name="Bajic V.B."/>
            <person name="Brenner S.E."/>
            <person name="Batalov S."/>
            <person name="Forrest A.R."/>
            <person name="Zavolan M."/>
            <person name="Davis M.J."/>
            <person name="Wilming L.G."/>
            <person name="Aidinis V."/>
            <person name="Allen J.E."/>
            <person name="Ambesi-Impiombato A."/>
            <person name="Apweiler R."/>
            <person name="Aturaliya R.N."/>
            <person name="Bailey T.L."/>
            <person name="Bansal M."/>
            <person name="Baxter L."/>
            <person name="Beisel K.W."/>
            <person name="Bersano T."/>
            <person name="Bono H."/>
            <person name="Chalk A.M."/>
            <person name="Chiu K.P."/>
            <person name="Choudhary V."/>
            <person name="Christoffels A."/>
            <person name="Clutterbuck D.R."/>
            <person name="Crowe M.L."/>
            <person name="Dalla E."/>
            <person name="Dalrymple B.P."/>
            <person name="de Bono B."/>
            <person name="Della Gatta G."/>
            <person name="di Bernardo D."/>
            <person name="Down T."/>
            <person name="Engstrom P."/>
            <person name="Fagiolini M."/>
            <person name="Faulkner G."/>
            <person name="Fletcher C.F."/>
            <person name="Fukushima T."/>
            <person name="Furuno M."/>
            <person name="Futaki S."/>
            <person name="Gariboldi M."/>
            <person name="Georgii-Hemming P."/>
            <person name="Gingeras T.R."/>
            <person name="Gojobori T."/>
            <person name="Green R.E."/>
            <person name="Gustincich S."/>
            <person name="Harbers M."/>
            <person name="Hayashi Y."/>
            <person name="Hensch T.K."/>
            <person name="Hirokawa N."/>
            <person name="Hill D."/>
            <person name="Huminiecki L."/>
            <person name="Iacono M."/>
            <person name="Ikeo K."/>
            <person name="Iwama A."/>
            <person name="Ishikawa T."/>
            <person name="Jakt M."/>
            <person name="Kanapin A."/>
            <person name="Katoh M."/>
            <person name="Kawasawa Y."/>
            <person name="Kelso J."/>
            <person name="Kitamura H."/>
            <person name="Kitano H."/>
            <person name="Kollias G."/>
            <person name="Krishnan S.P."/>
            <person name="Kruger A."/>
            <person name="Kummerfeld S.K."/>
            <person name="Kurochkin I.V."/>
            <person name="Lareau L.F."/>
            <person name="Lazarevic D."/>
            <person name="Lipovich L."/>
            <person name="Liu J."/>
            <person name="Liuni S."/>
            <person name="McWilliam S."/>
            <person name="Madan Babu M."/>
            <person name="Madera M."/>
            <person name="Marchionni L."/>
            <person name="Matsuda H."/>
            <person name="Matsuzawa S."/>
            <person name="Miki H."/>
            <person name="Mignone F."/>
            <person name="Miyake S."/>
            <person name="Morris K."/>
            <person name="Mottagui-Tabar S."/>
            <person name="Mulder N."/>
            <person name="Nakano N."/>
            <person name="Nakauchi H."/>
            <person name="Ng P."/>
            <person name="Nilsson R."/>
            <person name="Nishiguchi S."/>
            <person name="Nishikawa S."/>
            <person name="Nori F."/>
            <person name="Ohara O."/>
            <person name="Okazaki Y."/>
            <person name="Orlando V."/>
            <person name="Pang K.C."/>
            <person name="Pavan W.J."/>
            <person name="Pavesi G."/>
            <person name="Pesole G."/>
            <person name="Petrovsky N."/>
            <person name="Piazza S."/>
            <person name="Reed J."/>
            <person name="Reid J.F."/>
            <person name="Ring B.Z."/>
            <person name="Ringwald M."/>
            <person name="Rost B."/>
            <person name="Ruan Y."/>
            <person name="Salzberg S.L."/>
            <person name="Sandelin A."/>
            <person name="Schneider C."/>
            <person name="Schoenbach C."/>
            <person name="Sekiguchi K."/>
            <person name="Semple C.A."/>
            <person name="Seno S."/>
            <person name="Sessa L."/>
            <person name="Sheng Y."/>
            <person name="Shibata Y."/>
            <person name="Shimada H."/>
            <person name="Shimada K."/>
            <person name="Silva D."/>
            <person name="Sinclair B."/>
            <person name="Sperling S."/>
            <person name="Stupka E."/>
            <person name="Sugiura K."/>
            <person name="Sultana R."/>
            <person name="Takenaka Y."/>
            <person name="Taki K."/>
            <person name="Tammoja K."/>
            <person name="Tan S.L."/>
            <person name="Tang S."/>
            <person name="Taylor M.S."/>
            <person name="Tegner J."/>
            <person name="Teichmann S.A."/>
            <person name="Ueda H.R."/>
            <person name="van Nimwegen E."/>
            <person name="Verardo R."/>
            <person name="Wei C.L."/>
            <person name="Yagi K."/>
            <person name="Yamanishi H."/>
            <person name="Zabarovsky E."/>
            <person name="Zhu S."/>
            <person name="Zimmer A."/>
            <person name="Hide W."/>
            <person name="Bult C."/>
            <person name="Grimmond S.M."/>
            <person name="Teasdale R.D."/>
            <person name="Liu E.T."/>
            <person name="Brusic V."/>
            <person name="Quackenbush J."/>
            <person name="Wahlestedt C."/>
            <person name="Mattick J.S."/>
            <person name="Hume D.A."/>
            <person name="Kai C."/>
            <person name="Sasaki D."/>
            <person name="Tomaru Y."/>
            <person name="Fukuda S."/>
            <person name="Kanamori-Katayama M."/>
            <person name="Suzuki M."/>
            <person name="Aoki J."/>
            <person name="Arakawa T."/>
            <person name="Iida J."/>
            <person name="Imamura K."/>
            <person name="Itoh M."/>
            <person name="Kato T."/>
            <person name="Kawaji H."/>
            <person name="Kawagashira N."/>
            <person name="Kawashima T."/>
            <person name="Kojima M."/>
            <person name="Kondo S."/>
            <person name="Konno H."/>
            <person name="Nakano K."/>
            <person name="Ninomiya N."/>
            <person name="Nishio T."/>
            <person name="Okada M."/>
            <person name="Plessy C."/>
            <person name="Shibata K."/>
            <person name="Shiraki T."/>
            <person name="Suzuki S."/>
            <person name="Tagami M."/>
            <person name="Waki K."/>
            <person name="Watahiki A."/>
            <person name="Okamura-Oho Y."/>
            <person name="Suzuki H."/>
            <person name="Kawai J."/>
            <person name="Hayashizaki Y."/>
        </authorList>
    </citation>
    <scope>NUCLEOTIDE SEQUENCE [LARGE SCALE MRNA] (ISOFORM 2)</scope>
    <source>
        <strain>C57BL/6J</strain>
        <tissue>Heart</tissue>
    </source>
</reference>
<reference key="2">
    <citation type="journal article" date="2004" name="Genome Res.">
        <title>The status, quality, and expansion of the NIH full-length cDNA project: the Mammalian Gene Collection (MGC).</title>
        <authorList>
            <consortium name="The MGC Project Team"/>
        </authorList>
    </citation>
    <scope>NUCLEOTIDE SEQUENCE [LARGE SCALE MRNA] (ISOFORM 1)</scope>
    <source>
        <strain>Czech II</strain>
        <tissue>Mammary tumor</tissue>
    </source>
</reference>
<reference key="3">
    <citation type="journal article" date="2010" name="Cell">
        <title>A tissue-specific atlas of mouse protein phosphorylation and expression.</title>
        <authorList>
            <person name="Huttlin E.L."/>
            <person name="Jedrychowski M.P."/>
            <person name="Elias J.E."/>
            <person name="Goswami T."/>
            <person name="Rad R."/>
            <person name="Beausoleil S.A."/>
            <person name="Villen J."/>
            <person name="Haas W."/>
            <person name="Sowa M.E."/>
            <person name="Gygi S.P."/>
        </authorList>
    </citation>
    <scope>IDENTIFICATION BY MASS SPECTROMETRY [LARGE SCALE ANALYSIS]</scope>
    <source>
        <tissue>Testis</tissue>
    </source>
</reference>
<dbReference type="EMBL" id="AK003140">
    <property type="protein sequence ID" value="BAB22598.1"/>
    <property type="molecule type" value="mRNA"/>
</dbReference>
<dbReference type="EMBL" id="BC011108">
    <property type="protein sequence ID" value="AAH11108.1"/>
    <property type="molecule type" value="mRNA"/>
</dbReference>
<dbReference type="CCDS" id="CCDS20362.1">
    <molecule id="Q921R8-1"/>
</dbReference>
<dbReference type="CCDS" id="CCDS20363.1">
    <molecule id="Q921R8-2"/>
</dbReference>
<dbReference type="RefSeq" id="NP_001032570.1">
    <molecule id="Q921R8-2"/>
    <property type="nucleotide sequence ID" value="NM_001037493.2"/>
</dbReference>
<dbReference type="RefSeq" id="NP_082144.2">
    <property type="nucleotide sequence ID" value="NM_027868.2"/>
</dbReference>
<dbReference type="BioGRID" id="214864">
    <property type="interactions" value="1"/>
</dbReference>
<dbReference type="FunCoup" id="Q921R8">
    <property type="interactions" value="84"/>
</dbReference>
<dbReference type="IntAct" id="Q921R8">
    <property type="interactions" value="1"/>
</dbReference>
<dbReference type="MINT" id="Q921R8"/>
<dbReference type="STRING" id="10090.ENSMUSP00000037473"/>
<dbReference type="PhosphoSitePlus" id="Q921R8"/>
<dbReference type="PaxDb" id="10090-ENSMUSP00000037473"/>
<dbReference type="PeptideAtlas" id="Q921R8"/>
<dbReference type="ProteomicsDB" id="256819">
    <molecule id="Q921R8-1"/>
</dbReference>
<dbReference type="ProteomicsDB" id="256820">
    <molecule id="Q921R8-2"/>
</dbReference>
<dbReference type="Pumba" id="Q921R8"/>
<dbReference type="Antibodypedia" id="33042">
    <property type="antibodies" value="36 antibodies from 14 providers"/>
</dbReference>
<dbReference type="DNASU" id="71699"/>
<dbReference type="Ensembl" id="ENSMUST00000032177.10">
    <molecule id="Q921R8-2"/>
    <property type="protein sequence ID" value="ENSMUSP00000032177.9"/>
    <property type="gene ID" value="ENSMUSG00000030089.16"/>
</dbReference>
<dbReference type="GeneID" id="71699"/>
<dbReference type="KEGG" id="mmu:71699"/>
<dbReference type="UCSC" id="uc009cxp.2">
    <molecule id="Q921R8-2"/>
    <property type="organism name" value="mouse"/>
</dbReference>
<dbReference type="AGR" id="MGI:1918949"/>
<dbReference type="CTD" id="54946"/>
<dbReference type="MGI" id="MGI:1918949">
    <property type="gene designation" value="Slc41a3"/>
</dbReference>
<dbReference type="VEuPathDB" id="HostDB:ENSMUSG00000030089"/>
<dbReference type="eggNOG" id="KOG3788">
    <property type="taxonomic scope" value="Eukaryota"/>
</dbReference>
<dbReference type="GeneTree" id="ENSGT00950000183042"/>
<dbReference type="HOGENOM" id="CLU_018207_2_0_1"/>
<dbReference type="InParanoid" id="Q921R8"/>
<dbReference type="OMA" id="NLEFCFQ"/>
<dbReference type="OrthoDB" id="5791097at2759"/>
<dbReference type="PhylomeDB" id="Q921R8"/>
<dbReference type="BioGRID-ORCS" id="71699">
    <property type="hits" value="3 hits in 77 CRISPR screens"/>
</dbReference>
<dbReference type="PRO" id="PR:Q921R8"/>
<dbReference type="Proteomes" id="UP000000589">
    <property type="component" value="Chromosome 6"/>
</dbReference>
<dbReference type="RNAct" id="Q921R8">
    <property type="molecule type" value="protein"/>
</dbReference>
<dbReference type="Bgee" id="ENSMUSG00000030089">
    <property type="expression patterns" value="Expressed in interventricular septum and 224 other cell types or tissues"/>
</dbReference>
<dbReference type="ExpressionAtlas" id="Q921R8">
    <property type="expression patterns" value="baseline and differential"/>
</dbReference>
<dbReference type="GO" id="GO:0005743">
    <property type="term" value="C:mitochondrial inner membrane"/>
    <property type="evidence" value="ECO:0000250"/>
    <property type="project" value="UniProtKB"/>
</dbReference>
<dbReference type="GO" id="GO:0061768">
    <property type="term" value="F:magnesium:sodium antiporter activity"/>
    <property type="evidence" value="ECO:0000250"/>
    <property type="project" value="UniProtKB"/>
</dbReference>
<dbReference type="GO" id="GO:0045016">
    <property type="term" value="P:mitochondrial magnesium ion transmembrane transport"/>
    <property type="evidence" value="ECO:0000250"/>
    <property type="project" value="UniProtKB"/>
</dbReference>
<dbReference type="FunFam" id="1.10.357.20:FF:000001">
    <property type="entry name" value="Solute carrier family 41 member 2"/>
    <property type="match status" value="1"/>
</dbReference>
<dbReference type="FunFam" id="1.10.357.20:FF:000002">
    <property type="entry name" value="Solute carrier family 41, member 2"/>
    <property type="match status" value="1"/>
</dbReference>
<dbReference type="Gene3D" id="1.10.357.20">
    <property type="entry name" value="SLC41 divalent cation transporters, integral membrane domain"/>
    <property type="match status" value="2"/>
</dbReference>
<dbReference type="InterPro" id="IPR006667">
    <property type="entry name" value="SLC41_membr_dom"/>
</dbReference>
<dbReference type="InterPro" id="IPR036739">
    <property type="entry name" value="SLC41_membr_dom_sf"/>
</dbReference>
<dbReference type="InterPro" id="IPR045349">
    <property type="entry name" value="SLC41A1-3"/>
</dbReference>
<dbReference type="PANTHER" id="PTHR16228">
    <property type="entry name" value="DIVALENT CATION TRANSPORTER SOLUTE CARRIER FAMILY 41"/>
    <property type="match status" value="1"/>
</dbReference>
<dbReference type="PANTHER" id="PTHR16228:SF22">
    <property type="entry name" value="SOLUTE CARRIER FAMILY 41 MEMBER 3"/>
    <property type="match status" value="1"/>
</dbReference>
<dbReference type="Pfam" id="PF01769">
    <property type="entry name" value="MgtE"/>
    <property type="match status" value="2"/>
</dbReference>
<dbReference type="SUPFAM" id="SSF161093">
    <property type="entry name" value="MgtE membrane domain-like"/>
    <property type="match status" value="2"/>
</dbReference>
<evidence type="ECO:0000250" key="1">
    <source>
        <dbReference type="UniProtKB" id="Q96GZ6"/>
    </source>
</evidence>
<evidence type="ECO:0000255" key="2"/>
<evidence type="ECO:0000256" key="3">
    <source>
        <dbReference type="SAM" id="MobiDB-lite"/>
    </source>
</evidence>
<evidence type="ECO:0000303" key="4">
    <source>
    </source>
</evidence>
<evidence type="ECO:0000305" key="5"/>
<protein>
    <recommendedName>
        <fullName>Solute carrier family 41 member 3</fullName>
    </recommendedName>
</protein>
<organism>
    <name type="scientific">Mus musculus</name>
    <name type="common">Mouse</name>
    <dbReference type="NCBI Taxonomy" id="10090"/>
    <lineage>
        <taxon>Eukaryota</taxon>
        <taxon>Metazoa</taxon>
        <taxon>Chordata</taxon>
        <taxon>Craniata</taxon>
        <taxon>Vertebrata</taxon>
        <taxon>Euteleostomi</taxon>
        <taxon>Mammalia</taxon>
        <taxon>Eutheria</taxon>
        <taxon>Euarchontoglires</taxon>
        <taxon>Glires</taxon>
        <taxon>Rodentia</taxon>
        <taxon>Myomorpha</taxon>
        <taxon>Muroidea</taxon>
        <taxon>Muridae</taxon>
        <taxon>Murinae</taxon>
        <taxon>Mus</taxon>
        <taxon>Mus</taxon>
    </lineage>
</organism>
<feature type="chain" id="PRO_0000295593" description="Solute carrier family 41 member 3">
    <location>
        <begin position="1"/>
        <end position="488"/>
    </location>
</feature>
<feature type="transmembrane region" description="Helical" evidence="2">
    <location>
        <begin position="63"/>
        <end position="83"/>
    </location>
</feature>
<feature type="transmembrane region" description="Helical" evidence="2">
    <location>
        <begin position="147"/>
        <end position="167"/>
    </location>
</feature>
<feature type="transmembrane region" description="Helical" evidence="2">
    <location>
        <begin position="189"/>
        <end position="209"/>
    </location>
</feature>
<feature type="transmembrane region" description="Helical" evidence="2">
    <location>
        <begin position="220"/>
        <end position="240"/>
    </location>
</feature>
<feature type="transmembrane region" description="Helical" evidence="2">
    <location>
        <begin position="251"/>
        <end position="271"/>
    </location>
</feature>
<feature type="transmembrane region" description="Helical" evidence="2">
    <location>
        <begin position="284"/>
        <end position="304"/>
    </location>
</feature>
<feature type="transmembrane region" description="Helical" evidence="2">
    <location>
        <begin position="377"/>
        <end position="397"/>
    </location>
</feature>
<feature type="transmembrane region" description="Helical" evidence="2">
    <location>
        <begin position="406"/>
        <end position="426"/>
    </location>
</feature>
<feature type="transmembrane region" description="Helical" evidence="2">
    <location>
        <begin position="450"/>
        <end position="470"/>
    </location>
</feature>
<feature type="region of interest" description="Disordered" evidence="3">
    <location>
        <begin position="1"/>
        <end position="36"/>
    </location>
</feature>
<feature type="compositionally biased region" description="Basic and acidic residues" evidence="3">
    <location>
        <begin position="1"/>
        <end position="19"/>
    </location>
</feature>
<feature type="compositionally biased region" description="Basic and acidic residues" evidence="3">
    <location>
        <begin position="27"/>
        <end position="36"/>
    </location>
</feature>
<feature type="splice variant" id="VSP_026939" description="In isoform 2." evidence="4">
    <original>MEGTEARQRRLEGCGRLKELGPLPSHDAGRLPKASEEGHLAVSESQLVDAKSLEAPPGRETSLIIGFQVVIPFLLAGVGLSWAGLLLNYF</original>
    <variation>MVVTQLSLEFRFQGKKLRGFSCELTRSPHGILPEPVLTTTCQVAIPILLSGLGMMTAGLVMNTV</variation>
    <location>
        <begin position="1"/>
        <end position="90"/>
    </location>
</feature>
<comment type="function">
    <text evidence="1">Na(+)/Mg(2+) ion exchanger that acts as a predominant Mg(2+) efflux system at the mitochondrial inner membrane.</text>
</comment>
<comment type="catalytic activity">
    <reaction evidence="1">
        <text>Mg(2+)(in) + 2 Na(+)(out) = Mg(2+)(out) + 2 Na(+)(in)</text>
        <dbReference type="Rhea" id="RHEA:66616"/>
        <dbReference type="ChEBI" id="CHEBI:18420"/>
        <dbReference type="ChEBI" id="CHEBI:29101"/>
    </reaction>
    <physiologicalReaction direction="left-to-right" evidence="1">
        <dbReference type="Rhea" id="RHEA:66617"/>
    </physiologicalReaction>
</comment>
<comment type="subcellular location">
    <subcellularLocation>
        <location evidence="1">Mitochondrion inner membrane</location>
        <topology evidence="2">Multi-pass membrane protein</topology>
    </subcellularLocation>
</comment>
<comment type="alternative products">
    <event type="alternative splicing"/>
    <isoform>
        <id>Q921R8-1</id>
        <name>1</name>
        <sequence type="displayed"/>
    </isoform>
    <isoform>
        <id>Q921R8-2</id>
        <name>2</name>
        <sequence type="described" ref="VSP_026939"/>
    </isoform>
</comment>
<comment type="similarity">
    <text evidence="5">Belongs to the SLC41A transporter family.</text>
</comment>
<proteinExistence type="evidence at protein level"/>